<protein>
    <recommendedName>
        <fullName evidence="1">Probable transcriptional regulatory protein HEAR0561</fullName>
    </recommendedName>
</protein>
<accession>A4G2N0</accession>
<dbReference type="EMBL" id="CU207211">
    <property type="protein sequence ID" value="CAL60767.1"/>
    <property type="molecule type" value="Genomic_DNA"/>
</dbReference>
<dbReference type="SMR" id="A4G2N0"/>
<dbReference type="STRING" id="204773.HEAR0561"/>
<dbReference type="KEGG" id="har:HEAR0561"/>
<dbReference type="eggNOG" id="COG0217">
    <property type="taxonomic scope" value="Bacteria"/>
</dbReference>
<dbReference type="HOGENOM" id="CLU_062974_2_2_4"/>
<dbReference type="OrthoDB" id="9781053at2"/>
<dbReference type="Proteomes" id="UP000006697">
    <property type="component" value="Chromosome"/>
</dbReference>
<dbReference type="GO" id="GO:0005829">
    <property type="term" value="C:cytosol"/>
    <property type="evidence" value="ECO:0007669"/>
    <property type="project" value="TreeGrafter"/>
</dbReference>
<dbReference type="GO" id="GO:0003677">
    <property type="term" value="F:DNA binding"/>
    <property type="evidence" value="ECO:0007669"/>
    <property type="project" value="UniProtKB-UniRule"/>
</dbReference>
<dbReference type="GO" id="GO:0006355">
    <property type="term" value="P:regulation of DNA-templated transcription"/>
    <property type="evidence" value="ECO:0007669"/>
    <property type="project" value="UniProtKB-UniRule"/>
</dbReference>
<dbReference type="FunFam" id="1.10.10.200:FF:000001">
    <property type="entry name" value="Probable transcriptional regulatory protein YebC"/>
    <property type="match status" value="1"/>
</dbReference>
<dbReference type="FunFam" id="3.30.70.980:FF:000002">
    <property type="entry name" value="Probable transcriptional regulatory protein YebC"/>
    <property type="match status" value="1"/>
</dbReference>
<dbReference type="Gene3D" id="1.10.10.200">
    <property type="match status" value="1"/>
</dbReference>
<dbReference type="Gene3D" id="3.30.70.980">
    <property type="match status" value="2"/>
</dbReference>
<dbReference type="HAMAP" id="MF_00693">
    <property type="entry name" value="Transcrip_reg_TACO1"/>
    <property type="match status" value="1"/>
</dbReference>
<dbReference type="InterPro" id="IPR017856">
    <property type="entry name" value="Integrase-like_N"/>
</dbReference>
<dbReference type="InterPro" id="IPR048300">
    <property type="entry name" value="TACO1_YebC-like_2nd/3rd_dom"/>
</dbReference>
<dbReference type="InterPro" id="IPR049083">
    <property type="entry name" value="TACO1_YebC_N"/>
</dbReference>
<dbReference type="InterPro" id="IPR002876">
    <property type="entry name" value="Transcrip_reg_TACO1-like"/>
</dbReference>
<dbReference type="InterPro" id="IPR026564">
    <property type="entry name" value="Transcrip_reg_TACO1-like_dom3"/>
</dbReference>
<dbReference type="InterPro" id="IPR029072">
    <property type="entry name" value="YebC-like"/>
</dbReference>
<dbReference type="NCBIfam" id="NF001030">
    <property type="entry name" value="PRK00110.1"/>
    <property type="match status" value="1"/>
</dbReference>
<dbReference type="NCBIfam" id="NF009044">
    <property type="entry name" value="PRK12378.1"/>
    <property type="match status" value="1"/>
</dbReference>
<dbReference type="NCBIfam" id="TIGR01033">
    <property type="entry name" value="YebC/PmpR family DNA-binding transcriptional regulator"/>
    <property type="match status" value="1"/>
</dbReference>
<dbReference type="PANTHER" id="PTHR12532:SF6">
    <property type="entry name" value="TRANSCRIPTIONAL REGULATORY PROTEIN YEBC-RELATED"/>
    <property type="match status" value="1"/>
</dbReference>
<dbReference type="PANTHER" id="PTHR12532">
    <property type="entry name" value="TRANSLATIONAL ACTIVATOR OF CYTOCHROME C OXIDASE 1"/>
    <property type="match status" value="1"/>
</dbReference>
<dbReference type="Pfam" id="PF20772">
    <property type="entry name" value="TACO1_YebC_N"/>
    <property type="match status" value="1"/>
</dbReference>
<dbReference type="Pfam" id="PF01709">
    <property type="entry name" value="Transcrip_reg"/>
    <property type="match status" value="1"/>
</dbReference>
<dbReference type="SUPFAM" id="SSF75625">
    <property type="entry name" value="YebC-like"/>
    <property type="match status" value="1"/>
</dbReference>
<organism>
    <name type="scientific">Herminiimonas arsenicoxydans</name>
    <dbReference type="NCBI Taxonomy" id="204773"/>
    <lineage>
        <taxon>Bacteria</taxon>
        <taxon>Pseudomonadati</taxon>
        <taxon>Pseudomonadota</taxon>
        <taxon>Betaproteobacteria</taxon>
        <taxon>Burkholderiales</taxon>
        <taxon>Oxalobacteraceae</taxon>
        <taxon>Herminiimonas</taxon>
    </lineage>
</organism>
<gene>
    <name type="ordered locus">HEAR0561</name>
</gene>
<evidence type="ECO:0000255" key="1">
    <source>
        <dbReference type="HAMAP-Rule" id="MF_00693"/>
    </source>
</evidence>
<comment type="subcellular location">
    <subcellularLocation>
        <location evidence="1">Cytoplasm</location>
    </subcellularLocation>
</comment>
<comment type="similarity">
    <text evidence="1">Belongs to the TACO1 family.</text>
</comment>
<feature type="chain" id="PRO_1000045320" description="Probable transcriptional regulatory protein HEAR0561">
    <location>
        <begin position="1"/>
        <end position="242"/>
    </location>
</feature>
<reference key="1">
    <citation type="journal article" date="2007" name="PLoS Genet.">
        <title>A tale of two oxidation states: bacterial colonization of arsenic-rich environments.</title>
        <authorList>
            <person name="Muller D."/>
            <person name="Medigue C."/>
            <person name="Koechler S."/>
            <person name="Barbe V."/>
            <person name="Barakat M."/>
            <person name="Talla E."/>
            <person name="Bonnefoy V."/>
            <person name="Krin E."/>
            <person name="Arsene-Ploetze F."/>
            <person name="Carapito C."/>
            <person name="Chandler M."/>
            <person name="Cournoyer B."/>
            <person name="Cruveiller S."/>
            <person name="Dossat C."/>
            <person name="Duval S."/>
            <person name="Heymann M."/>
            <person name="Leize E."/>
            <person name="Lieutaud A."/>
            <person name="Lievremont D."/>
            <person name="Makita Y."/>
            <person name="Mangenot S."/>
            <person name="Nitschke W."/>
            <person name="Ortet P."/>
            <person name="Perdrial N."/>
            <person name="Schoepp B."/>
            <person name="Siguier P."/>
            <person name="Simeonova D.D."/>
            <person name="Rouy Z."/>
            <person name="Segurens B."/>
            <person name="Turlin E."/>
            <person name="Vallenet D."/>
            <person name="van Dorsselaer A."/>
            <person name="Weiss S."/>
            <person name="Weissenbach J."/>
            <person name="Lett M.-C."/>
            <person name="Danchin A."/>
            <person name="Bertin P.N."/>
        </authorList>
    </citation>
    <scope>NUCLEOTIDE SEQUENCE [LARGE SCALE GENOMIC DNA]</scope>
    <source>
        <strain>ULPAs1</strain>
    </source>
</reference>
<proteinExistence type="inferred from homology"/>
<keyword id="KW-0963">Cytoplasm</keyword>
<keyword id="KW-0238">DNA-binding</keyword>
<keyword id="KW-1185">Reference proteome</keyword>
<keyword id="KW-0804">Transcription</keyword>
<keyword id="KW-0805">Transcription regulation</keyword>
<name>Y561_HERAR</name>
<sequence>MAGHSKWANIQHRKGRQDEKRGKIWTRLIKEITVAARMGGGDIAANPRLRLAVDKAADANMPKDNVTRAIQRGSGGLEGVNYEEIRYEGYGINGAAILVDCMTDNRVRTVAEVRHAFSKFGGNMGTEGSVAFLFKHCGQFFFAPGTDEDKLMEAALEAGAEDVTTDEEGGIEVICPPHDFSAVKDALAAAGFKAELAEVVMKPATETVFEGDDAVKMQKLLDALENLDDVQEVFTNAVIEQA</sequence>